<evidence type="ECO:0000250" key="1">
    <source>
        <dbReference type="UniProtKB" id="P02795"/>
    </source>
</evidence>
<evidence type="ECO:0000269" key="2">
    <source>
    </source>
</evidence>
<evidence type="ECO:0000305" key="3"/>
<protein>
    <recommendedName>
        <fullName>Metallothionein-2B</fullName>
        <shortName>MT-2B</shortName>
    </recommendedName>
    <alternativeName>
        <fullName>Metallothionein-IIB</fullName>
        <shortName>MT-IIB</shortName>
    </alternativeName>
</protein>
<dbReference type="PIR" id="S54334">
    <property type="entry name" value="S54334"/>
</dbReference>
<dbReference type="SMR" id="P80289"/>
<dbReference type="FunCoup" id="P80289">
    <property type="interactions" value="29"/>
</dbReference>
<dbReference type="iPTMnet" id="P80289"/>
<dbReference type="InParanoid" id="P80289"/>
<dbReference type="Proteomes" id="UP000001811">
    <property type="component" value="Unplaced"/>
</dbReference>
<dbReference type="GO" id="GO:0005737">
    <property type="term" value="C:cytoplasm"/>
    <property type="evidence" value="ECO:0000250"/>
    <property type="project" value="UniProtKB"/>
</dbReference>
<dbReference type="GO" id="GO:0005634">
    <property type="term" value="C:nucleus"/>
    <property type="evidence" value="ECO:0000250"/>
    <property type="project" value="UniProtKB"/>
</dbReference>
<dbReference type="GO" id="GO:0008270">
    <property type="term" value="F:zinc ion binding"/>
    <property type="evidence" value="ECO:0000250"/>
    <property type="project" value="UniProtKB"/>
</dbReference>
<dbReference type="GO" id="GO:0071276">
    <property type="term" value="P:cellular response to cadmium ion"/>
    <property type="evidence" value="ECO:0007669"/>
    <property type="project" value="TreeGrafter"/>
</dbReference>
<dbReference type="GO" id="GO:0071280">
    <property type="term" value="P:cellular response to copper ion"/>
    <property type="evidence" value="ECO:0007669"/>
    <property type="project" value="TreeGrafter"/>
</dbReference>
<dbReference type="GO" id="GO:0071294">
    <property type="term" value="P:cellular response to zinc ion"/>
    <property type="evidence" value="ECO:0000250"/>
    <property type="project" value="UniProtKB"/>
</dbReference>
<dbReference type="GO" id="GO:0010273">
    <property type="term" value="P:detoxification of copper ion"/>
    <property type="evidence" value="ECO:0007669"/>
    <property type="project" value="TreeGrafter"/>
</dbReference>
<dbReference type="GO" id="GO:0006882">
    <property type="term" value="P:intracellular zinc ion homeostasis"/>
    <property type="evidence" value="ECO:0007669"/>
    <property type="project" value="TreeGrafter"/>
</dbReference>
<dbReference type="GO" id="GO:0045926">
    <property type="term" value="P:negative regulation of growth"/>
    <property type="evidence" value="ECO:0000250"/>
    <property type="project" value="UniProtKB"/>
</dbReference>
<dbReference type="FunFam" id="4.10.10.10:FF:000001">
    <property type="entry name" value="Metallothionein"/>
    <property type="match status" value="1"/>
</dbReference>
<dbReference type="Gene3D" id="4.10.10.10">
    <property type="entry name" value="Metallothionein Isoform II"/>
    <property type="match status" value="1"/>
</dbReference>
<dbReference type="InterPro" id="IPR017854">
    <property type="entry name" value="Metalthion_dom_sf"/>
</dbReference>
<dbReference type="InterPro" id="IPR023587">
    <property type="entry name" value="Metalthion_dom_sf_vert"/>
</dbReference>
<dbReference type="InterPro" id="IPR000006">
    <property type="entry name" value="Metalthion_vert"/>
</dbReference>
<dbReference type="InterPro" id="IPR018064">
    <property type="entry name" value="Metalthion_vert_metal_BS"/>
</dbReference>
<dbReference type="PANTHER" id="PTHR23299">
    <property type="entry name" value="METALLOTHIONEIN"/>
    <property type="match status" value="1"/>
</dbReference>
<dbReference type="PANTHER" id="PTHR23299:SF38">
    <property type="entry name" value="METALLOTHIONEIN-2B"/>
    <property type="match status" value="1"/>
</dbReference>
<dbReference type="Pfam" id="PF00131">
    <property type="entry name" value="Metallothio"/>
    <property type="match status" value="1"/>
</dbReference>
<dbReference type="PRINTS" id="PR00860">
    <property type="entry name" value="MTVERTEBRATE"/>
</dbReference>
<dbReference type="SUPFAM" id="SSF57868">
    <property type="entry name" value="Metallothionein"/>
    <property type="match status" value="1"/>
</dbReference>
<dbReference type="PROSITE" id="PS00203">
    <property type="entry name" value="METALLOTHIONEIN_VRT"/>
    <property type="match status" value="1"/>
</dbReference>
<name>MT2B_RABIT</name>
<comment type="function">
    <text>Metallothioneins have a high content of cysteine residues that bind various heavy metals; these proteins are transcriptionally regulated by both heavy metals and glucocorticoids.</text>
</comment>
<comment type="subunit">
    <text>Monomer.</text>
</comment>
<comment type="domain">
    <text>Class I metallothioneins contain 2 metal-binding domains: four divalent ions are chelated within cluster A of the alpha domain and are coordinated via cysteinyl thiolate bridges to 11 cysteine ligands. Cluster B, the corresponding region within the beta domain, can ligate three divalent ions to 9 cysteines.</text>
</comment>
<comment type="similarity">
    <text evidence="3">Belongs to the metallothionein superfamily. Type 1 family.</text>
</comment>
<proteinExistence type="evidence at protein level"/>
<sequence length="61" mass="6104">MDPNCSCATGDSCTCASSCKCKECKCTSCKKSCCSCCPAGCTKCAQGCICKGASDKCSCCA</sequence>
<accession>P80289</accession>
<keyword id="KW-0007">Acetylation</keyword>
<keyword id="KW-0104">Cadmium</keyword>
<keyword id="KW-0186">Copper</keyword>
<keyword id="KW-0903">Direct protein sequencing</keyword>
<keyword id="KW-0479">Metal-binding</keyword>
<keyword id="KW-0480">Metal-thiolate cluster</keyword>
<keyword id="KW-1185">Reference proteome</keyword>
<keyword id="KW-0862">Zinc</keyword>
<reference key="1">
    <citation type="journal article" date="1991" name="Methods Enzymol.">
        <title>Amino acid sequence determination.</title>
        <authorList>
            <person name="Hunziker P.E."/>
        </authorList>
    </citation>
    <scope>PROTEIN SEQUENCE</scope>
    <source>
        <strain>New Zealand white</strain>
        <tissue>Kidney</tissue>
        <tissue>Liver</tissue>
    </source>
</reference>
<reference key="2">
    <citation type="journal article" date="1995" name="Biochem. J.">
        <title>Primary structures of seven metallothioneins from rabbit tissue.</title>
        <authorList>
            <person name="Hunziker P.E."/>
            <person name="Kaur P."/>
            <person name="Wan M."/>
            <person name="Kaenzig A."/>
        </authorList>
    </citation>
    <scope>PROTEIN SEQUENCE</scope>
    <scope>ACETYLATION AT MET-1</scope>
    <source>
        <strain>New Zealand white</strain>
        <tissue>Kidney</tissue>
        <tissue>Liver</tissue>
    </source>
</reference>
<feature type="chain" id="PRO_0000197217" description="Metallothionein-2B">
    <location>
        <begin position="1"/>
        <end position="61"/>
    </location>
</feature>
<feature type="region of interest" description="Beta">
    <location>
        <begin position="1"/>
        <end position="29"/>
    </location>
</feature>
<feature type="region of interest" description="Alpha">
    <location>
        <begin position="30"/>
        <end position="61"/>
    </location>
</feature>
<feature type="binding site" evidence="1">
    <location>
        <position position="5"/>
    </location>
    <ligand>
        <name>a divalent metal cation</name>
        <dbReference type="ChEBI" id="CHEBI:60240"/>
        <label>1</label>
        <note>in cluster B</note>
    </ligand>
</feature>
<feature type="binding site" evidence="1">
    <location>
        <position position="7"/>
    </location>
    <ligand>
        <name>a divalent metal cation</name>
        <dbReference type="ChEBI" id="CHEBI:60240"/>
        <label>1</label>
        <note>in cluster B</note>
    </ligand>
</feature>
<feature type="binding site" evidence="1">
    <location>
        <position position="7"/>
    </location>
    <ligand>
        <name>a divalent metal cation</name>
        <dbReference type="ChEBI" id="CHEBI:60240"/>
        <label>2</label>
        <note>in cluster B</note>
    </ligand>
</feature>
<feature type="binding site" evidence="1">
    <location>
        <position position="13"/>
    </location>
    <ligand>
        <name>a divalent metal cation</name>
        <dbReference type="ChEBI" id="CHEBI:60240"/>
        <label>2</label>
        <note>in cluster B</note>
    </ligand>
</feature>
<feature type="binding site" evidence="1">
    <location>
        <position position="15"/>
    </location>
    <ligand>
        <name>a divalent metal cation</name>
        <dbReference type="ChEBI" id="CHEBI:60240"/>
        <label>2</label>
        <note>in cluster B</note>
    </ligand>
</feature>
<feature type="binding site" evidence="1">
    <location>
        <position position="15"/>
    </location>
    <ligand>
        <name>a divalent metal cation</name>
        <dbReference type="ChEBI" id="CHEBI:60240"/>
        <label>3</label>
        <note>in cluster B</note>
    </ligand>
</feature>
<feature type="binding site" evidence="1">
    <location>
        <position position="19"/>
    </location>
    <ligand>
        <name>a divalent metal cation</name>
        <dbReference type="ChEBI" id="CHEBI:60240"/>
        <label>3</label>
        <note>in cluster B</note>
    </ligand>
</feature>
<feature type="binding site" evidence="1">
    <location>
        <position position="21"/>
    </location>
    <ligand>
        <name>a divalent metal cation</name>
        <dbReference type="ChEBI" id="CHEBI:60240"/>
        <label>1</label>
        <note>in cluster B</note>
    </ligand>
</feature>
<feature type="binding site" evidence="1">
    <location>
        <position position="24"/>
    </location>
    <ligand>
        <name>a divalent metal cation</name>
        <dbReference type="ChEBI" id="CHEBI:60240"/>
        <label>1</label>
        <note>in cluster B</note>
    </ligand>
</feature>
<feature type="binding site" evidence="1">
    <location>
        <position position="24"/>
    </location>
    <ligand>
        <name>a divalent metal cation</name>
        <dbReference type="ChEBI" id="CHEBI:60240"/>
        <label>3</label>
        <note>in cluster B</note>
    </ligand>
</feature>
<feature type="binding site" evidence="1">
    <location>
        <position position="26"/>
    </location>
    <ligand>
        <name>a divalent metal cation</name>
        <dbReference type="ChEBI" id="CHEBI:60240"/>
        <label>2</label>
        <note>in cluster B</note>
    </ligand>
</feature>
<feature type="binding site" evidence="1">
    <location>
        <position position="29"/>
    </location>
    <ligand>
        <name>a divalent metal cation</name>
        <dbReference type="ChEBI" id="CHEBI:60240"/>
        <label>3</label>
        <note>in cluster B</note>
    </ligand>
</feature>
<feature type="binding site" evidence="1">
    <location>
        <position position="33"/>
    </location>
    <ligand>
        <name>a divalent metal cation</name>
        <dbReference type="ChEBI" id="CHEBI:60240"/>
        <label>4</label>
        <note>in cluster A</note>
    </ligand>
</feature>
<feature type="binding site" evidence="1">
    <location>
        <position position="34"/>
    </location>
    <ligand>
        <name>a divalent metal cation</name>
        <dbReference type="ChEBI" id="CHEBI:60240"/>
        <label>4</label>
        <note>in cluster A</note>
    </ligand>
</feature>
<feature type="binding site" evidence="1">
    <location>
        <position position="34"/>
    </location>
    <ligand>
        <name>a divalent metal cation</name>
        <dbReference type="ChEBI" id="CHEBI:60240"/>
        <label>5</label>
        <note>in cluster A</note>
    </ligand>
</feature>
<feature type="binding site" evidence="1">
    <location>
        <position position="36"/>
    </location>
    <ligand>
        <name>a divalent metal cation</name>
        <dbReference type="ChEBI" id="CHEBI:60240"/>
        <label>5</label>
        <note>in cluster A</note>
    </ligand>
</feature>
<feature type="binding site" evidence="1">
    <location>
        <position position="37"/>
    </location>
    <ligand>
        <name>a divalent metal cation</name>
        <dbReference type="ChEBI" id="CHEBI:60240"/>
        <label>5</label>
        <note>in cluster A</note>
    </ligand>
</feature>
<feature type="binding site" evidence="1">
    <location>
        <position position="37"/>
    </location>
    <ligand>
        <name>a divalent metal cation</name>
        <dbReference type="ChEBI" id="CHEBI:60240"/>
        <label>6</label>
        <note>in cluster A</note>
    </ligand>
</feature>
<feature type="binding site" evidence="1">
    <location>
        <position position="41"/>
    </location>
    <ligand>
        <name>a divalent metal cation</name>
        <dbReference type="ChEBI" id="CHEBI:60240"/>
        <label>6</label>
        <note>in cluster A</note>
    </ligand>
</feature>
<feature type="binding site" evidence="1">
    <location>
        <position position="44"/>
    </location>
    <ligand>
        <name>a divalent metal cation</name>
        <dbReference type="ChEBI" id="CHEBI:60240"/>
        <label>4</label>
        <note>in cluster A</note>
    </ligand>
</feature>
<feature type="binding site" evidence="1">
    <location>
        <position position="44"/>
    </location>
    <ligand>
        <name>a divalent metal cation</name>
        <dbReference type="ChEBI" id="CHEBI:60240"/>
        <label>6</label>
        <note>in cluster A</note>
    </ligand>
</feature>
<feature type="binding site" evidence="1">
    <location>
        <position position="48"/>
    </location>
    <ligand>
        <name>a divalent metal cation</name>
        <dbReference type="ChEBI" id="CHEBI:60240"/>
        <label>4</label>
        <note>in cluster A</note>
    </ligand>
</feature>
<feature type="binding site" evidence="1">
    <location>
        <position position="50"/>
    </location>
    <ligand>
        <name>a divalent metal cation</name>
        <dbReference type="ChEBI" id="CHEBI:60240"/>
        <label>5</label>
        <note>in cluster A</note>
    </ligand>
</feature>
<feature type="binding site" evidence="1">
    <location>
        <position position="50"/>
    </location>
    <ligand>
        <name>a divalent metal cation</name>
        <dbReference type="ChEBI" id="CHEBI:60240"/>
        <label>7</label>
        <note>in cluster A</note>
    </ligand>
</feature>
<feature type="binding site" evidence="1">
    <location>
        <position position="57"/>
    </location>
    <ligand>
        <name>a divalent metal cation</name>
        <dbReference type="ChEBI" id="CHEBI:60240"/>
        <label>7</label>
        <note>in cluster A</note>
    </ligand>
</feature>
<feature type="binding site" evidence="1">
    <location>
        <position position="59"/>
    </location>
    <ligand>
        <name>a divalent metal cation</name>
        <dbReference type="ChEBI" id="CHEBI:60240"/>
        <label>7</label>
        <note>in cluster A</note>
    </ligand>
</feature>
<feature type="binding site" evidence="1">
    <location>
        <position position="60"/>
    </location>
    <ligand>
        <name>a divalent metal cation</name>
        <dbReference type="ChEBI" id="CHEBI:60240"/>
        <label>6</label>
        <note>in cluster A</note>
    </ligand>
</feature>
<feature type="binding site" evidence="1">
    <location>
        <position position="60"/>
    </location>
    <ligand>
        <name>a divalent metal cation</name>
        <dbReference type="ChEBI" id="CHEBI:60240"/>
        <label>7</label>
        <note>in cluster A</note>
    </ligand>
</feature>
<feature type="modified residue" description="N-acetylmethionine" evidence="2">
    <location>
        <position position="1"/>
    </location>
</feature>
<organism>
    <name type="scientific">Oryctolagus cuniculus</name>
    <name type="common">Rabbit</name>
    <dbReference type="NCBI Taxonomy" id="9986"/>
    <lineage>
        <taxon>Eukaryota</taxon>
        <taxon>Metazoa</taxon>
        <taxon>Chordata</taxon>
        <taxon>Craniata</taxon>
        <taxon>Vertebrata</taxon>
        <taxon>Euteleostomi</taxon>
        <taxon>Mammalia</taxon>
        <taxon>Eutheria</taxon>
        <taxon>Euarchontoglires</taxon>
        <taxon>Glires</taxon>
        <taxon>Lagomorpha</taxon>
        <taxon>Leporidae</taxon>
        <taxon>Oryctolagus</taxon>
    </lineage>
</organism>